<sequence>MARAFPLERVRNIGIAAHIDAGKTTCTERILFYSGVVHKMGEVHDGAAVTDWMAQERERGITITAAAISTTWNDHRINIIDTPGHVDFTIEVERSMRVLDGVIAVFCAVGGVQPQSETVWRQADRYSVPRMVFVNKMDRTGADFLKVHGQIKNRLKANAIPIQLPIGAEGDLSGIIDLVKNKAFIYKDDLGKDIEETEIPDHMKELAAEWRAKLMECVAETDEELIEVFLETEELSEAQLASGIREGVLNHGLVPLLCGSAFKNKGVQLLLDAVVDYLPAPVDVPPIQGLLPNGKEAVRPSDDNAPFSALAFKVMADPYGKLTFVRMYSGVLEKGSYVLNSTKNEKERISRLIILKADDREEVDALRAGDLGAVLGLKNTTTGDTLCTTDDPIVLETLYIPEPVISVAVEPKTKGDMEKLSKALLSLAEEDPTFRVSTDPETSQTVIAGMGELHLEILVDRMLREFKVEANIGAPQVSYRETIRASSKGEGKFARQTGGKGQYGHVVIEMEPGEPGSGFEFVNKIVGGIVPKEYIKPAESGMRETCESGVIAGYPLIDVKVTMVDGSYHDVDSSEMAFKIAGSMAFKDGVKKCNPVLLEPMMKVEVEIPEDFLGSIIGDLSSRRGQVEGQSIDDGLSKVQSKVPLAEMFGYATQLRSMTQGRGIFSMEFSHYEEVPRNVAEAIISKNQGNS</sequence>
<feature type="chain" id="PRO_1000008867" description="Elongation factor G">
    <location>
        <begin position="1"/>
        <end position="691"/>
    </location>
</feature>
<feature type="domain" description="tr-type G">
    <location>
        <begin position="8"/>
        <end position="282"/>
    </location>
</feature>
<feature type="binding site" evidence="1">
    <location>
        <begin position="17"/>
        <end position="24"/>
    </location>
    <ligand>
        <name>GTP</name>
        <dbReference type="ChEBI" id="CHEBI:37565"/>
    </ligand>
</feature>
<feature type="binding site" evidence="1">
    <location>
        <begin position="81"/>
        <end position="85"/>
    </location>
    <ligand>
        <name>GTP</name>
        <dbReference type="ChEBI" id="CHEBI:37565"/>
    </ligand>
</feature>
<feature type="binding site" evidence="1">
    <location>
        <begin position="135"/>
        <end position="138"/>
    </location>
    <ligand>
        <name>GTP</name>
        <dbReference type="ChEBI" id="CHEBI:37565"/>
    </ligand>
</feature>
<evidence type="ECO:0000255" key="1">
    <source>
        <dbReference type="HAMAP-Rule" id="MF_00054"/>
    </source>
</evidence>
<gene>
    <name evidence="1" type="primary">fusA</name>
    <name type="ordered locus">P9303_23631</name>
</gene>
<comment type="function">
    <text evidence="1">Catalyzes the GTP-dependent ribosomal translocation step during translation elongation. During this step, the ribosome changes from the pre-translocational (PRE) to the post-translocational (POST) state as the newly formed A-site-bound peptidyl-tRNA and P-site-bound deacylated tRNA move to the P and E sites, respectively. Catalyzes the coordinated movement of the two tRNA molecules, the mRNA and conformational changes in the ribosome.</text>
</comment>
<comment type="subcellular location">
    <subcellularLocation>
        <location evidence="1">Cytoplasm</location>
    </subcellularLocation>
</comment>
<comment type="similarity">
    <text evidence="1">Belongs to the TRAFAC class translation factor GTPase superfamily. Classic translation factor GTPase family. EF-G/EF-2 subfamily.</text>
</comment>
<proteinExistence type="inferred from homology"/>
<reference key="1">
    <citation type="journal article" date="2007" name="PLoS Genet.">
        <title>Patterns and implications of gene gain and loss in the evolution of Prochlorococcus.</title>
        <authorList>
            <person name="Kettler G.C."/>
            <person name="Martiny A.C."/>
            <person name="Huang K."/>
            <person name="Zucker J."/>
            <person name="Coleman M.L."/>
            <person name="Rodrigue S."/>
            <person name="Chen F."/>
            <person name="Lapidus A."/>
            <person name="Ferriera S."/>
            <person name="Johnson J."/>
            <person name="Steglich C."/>
            <person name="Church G.M."/>
            <person name="Richardson P."/>
            <person name="Chisholm S.W."/>
        </authorList>
    </citation>
    <scope>NUCLEOTIDE SEQUENCE [LARGE SCALE GENOMIC DNA]</scope>
    <source>
        <strain>MIT 9303</strain>
    </source>
</reference>
<organism>
    <name type="scientific">Prochlorococcus marinus (strain MIT 9303)</name>
    <dbReference type="NCBI Taxonomy" id="59922"/>
    <lineage>
        <taxon>Bacteria</taxon>
        <taxon>Bacillati</taxon>
        <taxon>Cyanobacteriota</taxon>
        <taxon>Cyanophyceae</taxon>
        <taxon>Synechococcales</taxon>
        <taxon>Prochlorococcaceae</taxon>
        <taxon>Prochlorococcus</taxon>
    </lineage>
</organism>
<protein>
    <recommendedName>
        <fullName evidence="1">Elongation factor G</fullName>
        <shortName evidence="1">EF-G</shortName>
    </recommendedName>
</protein>
<accession>A2CC86</accession>
<dbReference type="EMBL" id="CP000554">
    <property type="protein sequence ID" value="ABM79096.1"/>
    <property type="molecule type" value="Genomic_DNA"/>
</dbReference>
<dbReference type="RefSeq" id="WP_011826957.1">
    <property type="nucleotide sequence ID" value="NC_008820.1"/>
</dbReference>
<dbReference type="SMR" id="A2CC86"/>
<dbReference type="STRING" id="59922.P9303_23631"/>
<dbReference type="KEGG" id="pmf:P9303_23631"/>
<dbReference type="HOGENOM" id="CLU_002794_4_1_3"/>
<dbReference type="BioCyc" id="PMAR59922:G1G80-2077-MONOMER"/>
<dbReference type="Proteomes" id="UP000002274">
    <property type="component" value="Chromosome"/>
</dbReference>
<dbReference type="GO" id="GO:0005737">
    <property type="term" value="C:cytoplasm"/>
    <property type="evidence" value="ECO:0007669"/>
    <property type="project" value="UniProtKB-SubCell"/>
</dbReference>
<dbReference type="GO" id="GO:0005525">
    <property type="term" value="F:GTP binding"/>
    <property type="evidence" value="ECO:0007669"/>
    <property type="project" value="UniProtKB-UniRule"/>
</dbReference>
<dbReference type="GO" id="GO:0003924">
    <property type="term" value="F:GTPase activity"/>
    <property type="evidence" value="ECO:0007669"/>
    <property type="project" value="InterPro"/>
</dbReference>
<dbReference type="GO" id="GO:0003746">
    <property type="term" value="F:translation elongation factor activity"/>
    <property type="evidence" value="ECO:0007669"/>
    <property type="project" value="UniProtKB-UniRule"/>
</dbReference>
<dbReference type="GO" id="GO:0032790">
    <property type="term" value="P:ribosome disassembly"/>
    <property type="evidence" value="ECO:0007669"/>
    <property type="project" value="TreeGrafter"/>
</dbReference>
<dbReference type="CDD" id="cd01886">
    <property type="entry name" value="EF-G"/>
    <property type="match status" value="1"/>
</dbReference>
<dbReference type="CDD" id="cd16262">
    <property type="entry name" value="EFG_III"/>
    <property type="match status" value="1"/>
</dbReference>
<dbReference type="CDD" id="cd01434">
    <property type="entry name" value="EFG_mtEFG1_IV"/>
    <property type="match status" value="1"/>
</dbReference>
<dbReference type="CDD" id="cd03713">
    <property type="entry name" value="EFG_mtEFG_C"/>
    <property type="match status" value="1"/>
</dbReference>
<dbReference type="CDD" id="cd04088">
    <property type="entry name" value="EFG_mtEFG_II"/>
    <property type="match status" value="1"/>
</dbReference>
<dbReference type="FunFam" id="2.40.30.10:FF:000006">
    <property type="entry name" value="Elongation factor G"/>
    <property type="match status" value="1"/>
</dbReference>
<dbReference type="FunFam" id="3.30.230.10:FF:000003">
    <property type="entry name" value="Elongation factor G"/>
    <property type="match status" value="1"/>
</dbReference>
<dbReference type="FunFam" id="3.30.70.240:FF:000001">
    <property type="entry name" value="Elongation factor G"/>
    <property type="match status" value="1"/>
</dbReference>
<dbReference type="FunFam" id="3.30.70.870:FF:000001">
    <property type="entry name" value="Elongation factor G"/>
    <property type="match status" value="1"/>
</dbReference>
<dbReference type="FunFam" id="3.40.50.300:FF:000029">
    <property type="entry name" value="Elongation factor G"/>
    <property type="match status" value="1"/>
</dbReference>
<dbReference type="Gene3D" id="3.30.230.10">
    <property type="match status" value="1"/>
</dbReference>
<dbReference type="Gene3D" id="3.30.70.240">
    <property type="match status" value="1"/>
</dbReference>
<dbReference type="Gene3D" id="3.30.70.870">
    <property type="entry name" value="Elongation Factor G (Translational Gtpase), domain 3"/>
    <property type="match status" value="1"/>
</dbReference>
<dbReference type="Gene3D" id="3.40.50.300">
    <property type="entry name" value="P-loop containing nucleotide triphosphate hydrolases"/>
    <property type="match status" value="1"/>
</dbReference>
<dbReference type="Gene3D" id="2.40.30.10">
    <property type="entry name" value="Translation factors"/>
    <property type="match status" value="1"/>
</dbReference>
<dbReference type="HAMAP" id="MF_00054_B">
    <property type="entry name" value="EF_G_EF_2_B"/>
    <property type="match status" value="1"/>
</dbReference>
<dbReference type="InterPro" id="IPR041095">
    <property type="entry name" value="EFG_II"/>
</dbReference>
<dbReference type="InterPro" id="IPR009022">
    <property type="entry name" value="EFG_III"/>
</dbReference>
<dbReference type="InterPro" id="IPR035647">
    <property type="entry name" value="EFG_III/V"/>
</dbReference>
<dbReference type="InterPro" id="IPR047872">
    <property type="entry name" value="EFG_IV"/>
</dbReference>
<dbReference type="InterPro" id="IPR035649">
    <property type="entry name" value="EFG_V"/>
</dbReference>
<dbReference type="InterPro" id="IPR000640">
    <property type="entry name" value="EFG_V-like"/>
</dbReference>
<dbReference type="InterPro" id="IPR004161">
    <property type="entry name" value="EFTu-like_2"/>
</dbReference>
<dbReference type="InterPro" id="IPR031157">
    <property type="entry name" value="G_TR_CS"/>
</dbReference>
<dbReference type="InterPro" id="IPR027417">
    <property type="entry name" value="P-loop_NTPase"/>
</dbReference>
<dbReference type="InterPro" id="IPR020568">
    <property type="entry name" value="Ribosomal_Su5_D2-typ_SF"/>
</dbReference>
<dbReference type="InterPro" id="IPR014721">
    <property type="entry name" value="Ribsml_uS5_D2-typ_fold_subgr"/>
</dbReference>
<dbReference type="InterPro" id="IPR005225">
    <property type="entry name" value="Small_GTP-bd"/>
</dbReference>
<dbReference type="InterPro" id="IPR000795">
    <property type="entry name" value="T_Tr_GTP-bd_dom"/>
</dbReference>
<dbReference type="InterPro" id="IPR009000">
    <property type="entry name" value="Transl_B-barrel_sf"/>
</dbReference>
<dbReference type="InterPro" id="IPR004540">
    <property type="entry name" value="Transl_elong_EFG/EF2"/>
</dbReference>
<dbReference type="InterPro" id="IPR005517">
    <property type="entry name" value="Transl_elong_EFG/EF2_IV"/>
</dbReference>
<dbReference type="NCBIfam" id="TIGR00484">
    <property type="entry name" value="EF-G"/>
    <property type="match status" value="1"/>
</dbReference>
<dbReference type="NCBIfam" id="NF009379">
    <property type="entry name" value="PRK12740.1-3"/>
    <property type="match status" value="1"/>
</dbReference>
<dbReference type="NCBIfam" id="NF009381">
    <property type="entry name" value="PRK12740.1-5"/>
    <property type="match status" value="1"/>
</dbReference>
<dbReference type="NCBIfam" id="NF009891">
    <property type="entry name" value="PRK13351.1-1"/>
    <property type="match status" value="1"/>
</dbReference>
<dbReference type="NCBIfam" id="TIGR00231">
    <property type="entry name" value="small_GTP"/>
    <property type="match status" value="1"/>
</dbReference>
<dbReference type="PANTHER" id="PTHR43261:SF1">
    <property type="entry name" value="RIBOSOME-RELEASING FACTOR 2, MITOCHONDRIAL"/>
    <property type="match status" value="1"/>
</dbReference>
<dbReference type="PANTHER" id="PTHR43261">
    <property type="entry name" value="TRANSLATION ELONGATION FACTOR G-RELATED"/>
    <property type="match status" value="1"/>
</dbReference>
<dbReference type="Pfam" id="PF00679">
    <property type="entry name" value="EFG_C"/>
    <property type="match status" value="1"/>
</dbReference>
<dbReference type="Pfam" id="PF14492">
    <property type="entry name" value="EFG_III"/>
    <property type="match status" value="1"/>
</dbReference>
<dbReference type="Pfam" id="PF03764">
    <property type="entry name" value="EFG_IV"/>
    <property type="match status" value="1"/>
</dbReference>
<dbReference type="Pfam" id="PF00009">
    <property type="entry name" value="GTP_EFTU"/>
    <property type="match status" value="1"/>
</dbReference>
<dbReference type="Pfam" id="PF03144">
    <property type="entry name" value="GTP_EFTU_D2"/>
    <property type="match status" value="1"/>
</dbReference>
<dbReference type="PRINTS" id="PR00315">
    <property type="entry name" value="ELONGATNFCT"/>
</dbReference>
<dbReference type="SMART" id="SM00838">
    <property type="entry name" value="EFG_C"/>
    <property type="match status" value="1"/>
</dbReference>
<dbReference type="SMART" id="SM00889">
    <property type="entry name" value="EFG_IV"/>
    <property type="match status" value="1"/>
</dbReference>
<dbReference type="SUPFAM" id="SSF54980">
    <property type="entry name" value="EF-G C-terminal domain-like"/>
    <property type="match status" value="2"/>
</dbReference>
<dbReference type="SUPFAM" id="SSF52540">
    <property type="entry name" value="P-loop containing nucleoside triphosphate hydrolases"/>
    <property type="match status" value="1"/>
</dbReference>
<dbReference type="SUPFAM" id="SSF54211">
    <property type="entry name" value="Ribosomal protein S5 domain 2-like"/>
    <property type="match status" value="1"/>
</dbReference>
<dbReference type="SUPFAM" id="SSF50447">
    <property type="entry name" value="Translation proteins"/>
    <property type="match status" value="1"/>
</dbReference>
<dbReference type="PROSITE" id="PS00301">
    <property type="entry name" value="G_TR_1"/>
    <property type="match status" value="1"/>
</dbReference>
<dbReference type="PROSITE" id="PS51722">
    <property type="entry name" value="G_TR_2"/>
    <property type="match status" value="1"/>
</dbReference>
<name>EFG_PROM3</name>
<keyword id="KW-0963">Cytoplasm</keyword>
<keyword id="KW-0251">Elongation factor</keyword>
<keyword id="KW-0342">GTP-binding</keyword>
<keyword id="KW-0547">Nucleotide-binding</keyword>
<keyword id="KW-0648">Protein biosynthesis</keyword>